<accession>P31741</accession>
<proteinExistence type="inferred from homology"/>
<organism>
    <name type="scientific">Aeromonas hydrophila</name>
    <dbReference type="NCBI Taxonomy" id="644"/>
    <lineage>
        <taxon>Bacteria</taxon>
        <taxon>Pseudomonadati</taxon>
        <taxon>Pseudomonadota</taxon>
        <taxon>Gammaproteobacteria</taxon>
        <taxon>Aeromonadales</taxon>
        <taxon>Aeromonadaceae</taxon>
        <taxon>Aeromonas</taxon>
    </lineage>
</organism>
<protein>
    <recommendedName>
        <fullName>Type II secretion system protein E</fullName>
        <shortName>T2SS protein E</shortName>
        <ecNumber evidence="1">7.4.2.8</ecNumber>
    </recommendedName>
    <alternativeName>
        <fullName>General secretion pathway protein E</fullName>
    </alternativeName>
    <alternativeName>
        <fullName>Type II traffic warden ATPase</fullName>
    </alternativeName>
</protein>
<dbReference type="EC" id="7.4.2.8" evidence="1"/>
<dbReference type="EMBL" id="X66504">
    <property type="protein sequence ID" value="CAA47126.1"/>
    <property type="molecule type" value="Genomic_DNA"/>
</dbReference>
<dbReference type="PIR" id="S22669">
    <property type="entry name" value="S22669"/>
</dbReference>
<dbReference type="SMR" id="P31741"/>
<dbReference type="eggNOG" id="COG2804">
    <property type="taxonomic scope" value="Bacteria"/>
</dbReference>
<dbReference type="GO" id="GO:0005886">
    <property type="term" value="C:plasma membrane"/>
    <property type="evidence" value="ECO:0007669"/>
    <property type="project" value="UniProtKB-SubCell"/>
</dbReference>
<dbReference type="GO" id="GO:0015627">
    <property type="term" value="C:type II protein secretion system complex"/>
    <property type="evidence" value="ECO:0007669"/>
    <property type="project" value="InterPro"/>
</dbReference>
<dbReference type="GO" id="GO:0005524">
    <property type="term" value="F:ATP binding"/>
    <property type="evidence" value="ECO:0007669"/>
    <property type="project" value="UniProtKB-KW"/>
</dbReference>
<dbReference type="GO" id="GO:0016887">
    <property type="term" value="F:ATP hydrolysis activity"/>
    <property type="evidence" value="ECO:0007669"/>
    <property type="project" value="InterPro"/>
</dbReference>
<dbReference type="GO" id="GO:0046872">
    <property type="term" value="F:metal ion binding"/>
    <property type="evidence" value="ECO:0007669"/>
    <property type="project" value="UniProtKB-KW"/>
</dbReference>
<dbReference type="GO" id="GO:0008564">
    <property type="term" value="F:protein-exporting ATPase activity"/>
    <property type="evidence" value="ECO:0007669"/>
    <property type="project" value="UniProtKB-EC"/>
</dbReference>
<dbReference type="GO" id="GO:0015628">
    <property type="term" value="P:protein secretion by the type II secretion system"/>
    <property type="evidence" value="ECO:0007669"/>
    <property type="project" value="InterPro"/>
</dbReference>
<dbReference type="CDD" id="cd01129">
    <property type="entry name" value="PulE-GspE-like"/>
    <property type="match status" value="1"/>
</dbReference>
<dbReference type="FunFam" id="3.30.450.90:FF:000001">
    <property type="entry name" value="Type II secretion system ATPase GspE"/>
    <property type="match status" value="1"/>
</dbReference>
<dbReference type="FunFam" id="3.40.50.300:FF:000398">
    <property type="entry name" value="Type IV pilus assembly ATPase PilB"/>
    <property type="match status" value="1"/>
</dbReference>
<dbReference type="Gene3D" id="3.30.450.90">
    <property type="match status" value="1"/>
</dbReference>
<dbReference type="Gene3D" id="3.40.50.300">
    <property type="entry name" value="P-loop containing nucleotide triphosphate hydrolases"/>
    <property type="match status" value="1"/>
</dbReference>
<dbReference type="Gene3D" id="3.30.300.160">
    <property type="entry name" value="Type II secretion system, protein E, N-terminal domain"/>
    <property type="match status" value="1"/>
</dbReference>
<dbReference type="InterPro" id="IPR003593">
    <property type="entry name" value="AAA+_ATPase"/>
</dbReference>
<dbReference type="InterPro" id="IPR054757">
    <property type="entry name" value="GSPE_N1E"/>
</dbReference>
<dbReference type="InterPro" id="IPR027417">
    <property type="entry name" value="P-loop_NTPase"/>
</dbReference>
<dbReference type="InterPro" id="IPR001482">
    <property type="entry name" value="T2SS/T4SS_dom"/>
</dbReference>
<dbReference type="InterPro" id="IPR037257">
    <property type="entry name" value="T2SS_E_N_sf"/>
</dbReference>
<dbReference type="InterPro" id="IPR013369">
    <property type="entry name" value="T2SS_GspE"/>
</dbReference>
<dbReference type="NCBIfam" id="TIGR02533">
    <property type="entry name" value="type_II_gspE"/>
    <property type="match status" value="1"/>
</dbReference>
<dbReference type="PANTHER" id="PTHR30258:SF27">
    <property type="entry name" value="BACTERIOPHAGE ADSORPTION PROTEIN B-RELATED"/>
    <property type="match status" value="1"/>
</dbReference>
<dbReference type="PANTHER" id="PTHR30258">
    <property type="entry name" value="TYPE II SECRETION SYSTEM PROTEIN GSPE-RELATED"/>
    <property type="match status" value="1"/>
</dbReference>
<dbReference type="Pfam" id="PF22341">
    <property type="entry name" value="GSPE_N1E"/>
    <property type="match status" value="1"/>
</dbReference>
<dbReference type="Pfam" id="PF00437">
    <property type="entry name" value="T2SSE"/>
    <property type="match status" value="1"/>
</dbReference>
<dbReference type="SMART" id="SM00382">
    <property type="entry name" value="AAA"/>
    <property type="match status" value="1"/>
</dbReference>
<dbReference type="SUPFAM" id="SSF160246">
    <property type="entry name" value="EspE N-terminal domain-like"/>
    <property type="match status" value="1"/>
</dbReference>
<dbReference type="SUPFAM" id="SSF52540">
    <property type="entry name" value="P-loop containing nucleoside triphosphate hydrolases"/>
    <property type="match status" value="1"/>
</dbReference>
<dbReference type="PROSITE" id="PS00662">
    <property type="entry name" value="T2SP_E"/>
    <property type="match status" value="1"/>
</dbReference>
<sequence length="501" mass="55882">MAAYQLDDTSLPAALPELPFAFARNFGVVLTERQGTPLLLCRPGVAPQTLLEVRRVAGCAFEVEQLGSDEFEELLMAHYQRDSSEARQLMEDLGNEMDFFALAEELPQSEDLLDADDDAPIIRLINAMLSEAIKEEASDIHIETFERVLVIRFRIDGVLREILRPHRKLASLLVSRIKVMSRMDIAEKRVPQDGRISLRIGGRAVDVRVSTMPSSYGERVVLRLLDKNNVRLELKQLGMTLANRNIISELIRKPHGIILVTGPTGSGKSTTLYAALSEINSRDRNILTVEDPIEYDLEGVGQTQVNTKVDMTFARGLRAILRQDPDVVMVGEIRDLETAQIAVQASLTGHLVMSTLHTNTAIGAITRMRDMGIEPFLLSSSLLAVLAQRLVRTLCPDCRAPRPITEQERLAMGMELAPDQQVWRPVGCEQCNHTGYRGRTGIHELVVIDEAVREAIHSASGELAIERLIRDHTPSIRRDGIDKVLKGQTSLEEVLRVTRED</sequence>
<gene>
    <name type="primary">exeE</name>
</gene>
<keyword id="KW-0067">ATP-binding</keyword>
<keyword id="KW-0997">Cell inner membrane</keyword>
<keyword id="KW-1003">Cell membrane</keyword>
<keyword id="KW-0472">Membrane</keyword>
<keyword id="KW-0479">Metal-binding</keyword>
<keyword id="KW-0547">Nucleotide-binding</keyword>
<keyword id="KW-0653">Protein transport</keyword>
<keyword id="KW-1278">Translocase</keyword>
<keyword id="KW-0813">Transport</keyword>
<keyword id="KW-0862">Zinc</keyword>
<reference key="1">
    <citation type="journal article" date="1992" name="Mol. Microbiol.">
        <title>The Aeromonas hydrophila exeE gene, required both for protein secretion and normal outer membrane biogenesis, is a member of a general secretion pathway.</title>
        <authorList>
            <person name="Jiang B."/>
            <person name="Howard S.P."/>
        </authorList>
    </citation>
    <scope>NUCLEOTIDE SEQUENCE [GENOMIC DNA]</scope>
    <source>
        <strain>Ah65</strain>
    </source>
</reference>
<feature type="chain" id="PRO_0000207283" description="Type II secretion system protein E">
    <location>
        <begin position="1"/>
        <end position="501"/>
    </location>
</feature>
<feature type="binding site" evidence="3">
    <location>
        <begin position="262"/>
        <end position="269"/>
    </location>
    <ligand>
        <name>ATP</name>
        <dbReference type="ChEBI" id="CHEBI:30616"/>
    </ligand>
</feature>
<feature type="binding site" evidence="1">
    <location>
        <position position="395"/>
    </location>
    <ligand>
        <name>Zn(2+)</name>
        <dbReference type="ChEBI" id="CHEBI:29105"/>
    </ligand>
</feature>
<feature type="binding site" evidence="1">
    <location>
        <position position="398"/>
    </location>
    <ligand>
        <name>Zn(2+)</name>
        <dbReference type="ChEBI" id="CHEBI:29105"/>
    </ligand>
</feature>
<feature type="binding site" evidence="1">
    <location>
        <position position="428"/>
    </location>
    <ligand>
        <name>Zn(2+)</name>
        <dbReference type="ChEBI" id="CHEBI:29105"/>
    </ligand>
</feature>
<feature type="binding site" evidence="1">
    <location>
        <position position="431"/>
    </location>
    <ligand>
        <name>Zn(2+)</name>
        <dbReference type="ChEBI" id="CHEBI:29105"/>
    </ligand>
</feature>
<evidence type="ECO:0000250" key="1">
    <source>
        <dbReference type="UniProtKB" id="P37093"/>
    </source>
</evidence>
<evidence type="ECO:0000250" key="2">
    <source>
        <dbReference type="UniProtKB" id="Q00512"/>
    </source>
</evidence>
<evidence type="ECO:0000255" key="3"/>
<evidence type="ECO:0000305" key="4"/>
<name>GSPE_AERHY</name>
<comment type="function">
    <text evidence="2">ATPase component of the type II secretion system required for the energy-dependent secretion of extracellular factors such as proteases and toxins from the periplasm. Acts as a molecular motor to provide the energy that is required for assembly of the pseudopilus and the extrusion of substrates generated in the cytoplasm.</text>
</comment>
<comment type="catalytic activity">
    <reaction evidence="1">
        <text>ATP + H2O + cellular proteinSide 1 = ADP + phosphate + cellular proteinSide 2.</text>
        <dbReference type="EC" id="7.4.2.8"/>
    </reaction>
</comment>
<comment type="cofactor">
    <cofactor evidence="1">
        <name>Zn(2+)</name>
        <dbReference type="ChEBI" id="CHEBI:29105"/>
    </cofactor>
</comment>
<comment type="subunit">
    <text evidence="1 2">Forms homooligomers; most probably hexamers (By similarity). Interacts with ExeL/GspL (By similarity).</text>
</comment>
<comment type="subcellular location">
    <subcellularLocation>
        <location evidence="2">Cell inner membrane</location>
    </subcellularLocation>
    <text evidence="2">Membrane association is not an intrinsic property but requires the ExeL/GspL gene product.</text>
</comment>
<comment type="similarity">
    <text evidence="4">Belongs to the GSP E family.</text>
</comment>